<reference key="1">
    <citation type="journal article" date="2009" name="J. Plant Physiol.">
        <title>Functional expression of five Arabidopsis fatty acyl-CoA reductase genes in Escherichia coli.</title>
        <authorList>
            <person name="Doan T.P.T."/>
            <person name="Carlsson A.S."/>
            <person name="Hamberg M."/>
            <person name="Buelow L."/>
            <person name="Stymne S."/>
            <person name="Olsson P."/>
        </authorList>
    </citation>
    <scope>NUCLEOTIDE SEQUENCE [MRNA]</scope>
    <scope>FUNCTION</scope>
    <scope>CATALYTIC ACTIVITY</scope>
</reference>
<reference key="2">
    <citation type="journal article" date="2000" name="Nature">
        <title>Sequence and analysis of chromosome 3 of the plant Arabidopsis thaliana.</title>
        <authorList>
            <person name="Salanoubat M."/>
            <person name="Lemcke K."/>
            <person name="Rieger M."/>
            <person name="Ansorge W."/>
            <person name="Unseld M."/>
            <person name="Fartmann B."/>
            <person name="Valle G."/>
            <person name="Bloecker H."/>
            <person name="Perez-Alonso M."/>
            <person name="Obermaier B."/>
            <person name="Delseny M."/>
            <person name="Boutry M."/>
            <person name="Grivell L.A."/>
            <person name="Mache R."/>
            <person name="Puigdomenech P."/>
            <person name="De Simone V."/>
            <person name="Choisne N."/>
            <person name="Artiguenave F."/>
            <person name="Robert C."/>
            <person name="Brottier P."/>
            <person name="Wincker P."/>
            <person name="Cattolico L."/>
            <person name="Weissenbach J."/>
            <person name="Saurin W."/>
            <person name="Quetier F."/>
            <person name="Schaefer M."/>
            <person name="Mueller-Auer S."/>
            <person name="Gabel C."/>
            <person name="Fuchs M."/>
            <person name="Benes V."/>
            <person name="Wurmbach E."/>
            <person name="Drzonek H."/>
            <person name="Erfle H."/>
            <person name="Jordan N."/>
            <person name="Bangert S."/>
            <person name="Wiedelmann R."/>
            <person name="Kranz H."/>
            <person name="Voss H."/>
            <person name="Holland R."/>
            <person name="Brandt P."/>
            <person name="Nyakatura G."/>
            <person name="Vezzi A."/>
            <person name="D'Angelo M."/>
            <person name="Pallavicini A."/>
            <person name="Toppo S."/>
            <person name="Simionati B."/>
            <person name="Conrad A."/>
            <person name="Hornischer K."/>
            <person name="Kauer G."/>
            <person name="Loehnert T.-H."/>
            <person name="Nordsiek G."/>
            <person name="Reichelt J."/>
            <person name="Scharfe M."/>
            <person name="Schoen O."/>
            <person name="Bargues M."/>
            <person name="Terol J."/>
            <person name="Climent J."/>
            <person name="Navarro P."/>
            <person name="Collado C."/>
            <person name="Perez-Perez A."/>
            <person name="Ottenwaelder B."/>
            <person name="Duchemin D."/>
            <person name="Cooke R."/>
            <person name="Laudie M."/>
            <person name="Berger-Llauro C."/>
            <person name="Purnelle B."/>
            <person name="Masuy D."/>
            <person name="de Haan M."/>
            <person name="Maarse A.C."/>
            <person name="Alcaraz J.-P."/>
            <person name="Cottet A."/>
            <person name="Casacuberta E."/>
            <person name="Monfort A."/>
            <person name="Argiriou A."/>
            <person name="Flores M."/>
            <person name="Liguori R."/>
            <person name="Vitale D."/>
            <person name="Mannhaupt G."/>
            <person name="Haase D."/>
            <person name="Schoof H."/>
            <person name="Rudd S."/>
            <person name="Zaccaria P."/>
            <person name="Mewes H.-W."/>
            <person name="Mayer K.F.X."/>
            <person name="Kaul S."/>
            <person name="Town C.D."/>
            <person name="Koo H.L."/>
            <person name="Tallon L.J."/>
            <person name="Jenkins J."/>
            <person name="Rooney T."/>
            <person name="Rizzo M."/>
            <person name="Walts A."/>
            <person name="Utterback T."/>
            <person name="Fujii C.Y."/>
            <person name="Shea T.P."/>
            <person name="Creasy T.H."/>
            <person name="Haas B."/>
            <person name="Maiti R."/>
            <person name="Wu D."/>
            <person name="Peterson J."/>
            <person name="Van Aken S."/>
            <person name="Pai G."/>
            <person name="Militscher J."/>
            <person name="Sellers P."/>
            <person name="Gill J.E."/>
            <person name="Feldblyum T.V."/>
            <person name="Preuss D."/>
            <person name="Lin X."/>
            <person name="Nierman W.C."/>
            <person name="Salzberg S.L."/>
            <person name="White O."/>
            <person name="Venter J.C."/>
            <person name="Fraser C.M."/>
            <person name="Kaneko T."/>
            <person name="Nakamura Y."/>
            <person name="Sato S."/>
            <person name="Kato T."/>
            <person name="Asamizu E."/>
            <person name="Sasamoto S."/>
            <person name="Kimura T."/>
            <person name="Idesawa K."/>
            <person name="Kawashima K."/>
            <person name="Kishida Y."/>
            <person name="Kiyokawa C."/>
            <person name="Kohara M."/>
            <person name="Matsumoto M."/>
            <person name="Matsuno A."/>
            <person name="Muraki A."/>
            <person name="Nakayama S."/>
            <person name="Nakazaki N."/>
            <person name="Shinpo S."/>
            <person name="Takeuchi C."/>
            <person name="Wada T."/>
            <person name="Watanabe A."/>
            <person name="Yamada M."/>
            <person name="Yasuda M."/>
            <person name="Tabata S."/>
        </authorList>
    </citation>
    <scope>NUCLEOTIDE SEQUENCE [LARGE SCALE GENOMIC DNA]</scope>
    <source>
        <strain>cv. Columbia</strain>
    </source>
</reference>
<reference key="3">
    <citation type="journal article" date="2017" name="Plant J.">
        <title>Araport11: a complete reannotation of the Arabidopsis thaliana reference genome.</title>
        <authorList>
            <person name="Cheng C.Y."/>
            <person name="Krishnakumar V."/>
            <person name="Chan A.P."/>
            <person name="Thibaud-Nissen F."/>
            <person name="Schobel S."/>
            <person name="Town C.D."/>
        </authorList>
    </citation>
    <scope>GENOME REANNOTATION</scope>
    <source>
        <strain>cv. Columbia</strain>
    </source>
</reference>
<reference key="4">
    <citation type="journal article" date="2006" name="Plant Biotechnol. J.">
        <title>Simultaneous high-throughput recombinational cloning of open reading frames in closed and open configurations.</title>
        <authorList>
            <person name="Underwood B.A."/>
            <person name="Vanderhaeghen R."/>
            <person name="Whitford R."/>
            <person name="Town C.D."/>
            <person name="Hilson P."/>
        </authorList>
    </citation>
    <scope>NUCLEOTIDE SEQUENCE [LARGE SCALE MRNA]</scope>
    <source>
        <strain>cv. Columbia</strain>
    </source>
</reference>
<reference key="5">
    <citation type="journal article" date="2013" name="J. Biol. Chem.">
        <title>Identification of amino acids conferring chain length substrate specificities on fatty alcohol-forming reductases FAR5 and FAR8 from Arabidopsis thaliana.</title>
        <authorList>
            <person name="Chacon M.G."/>
            <person name="Fournier A.E."/>
            <person name="Tran F."/>
            <person name="Dittrich-Domergue F."/>
            <person name="Pulsifer I.P."/>
            <person name="Domergue F."/>
            <person name="Rowland O."/>
        </authorList>
    </citation>
    <scope>FUNCTION</scope>
    <scope>CATALYTIC ACTIVITY</scope>
    <scope>MUTAGENESIS OF ILE-347; LEU-355; SER-363 AND MET-377</scope>
</reference>
<accession>Q1PEI6</accession>
<accession>A0MF04</accession>
<accession>Q9LXN1</accession>
<name>FACR8_ARATH</name>
<comment type="function">
    <text evidence="1 2">Catalyzes the reduction of fatty acyl-CoA to fatty alcohols (PubMed:19062129, PubMed:24005667). Catalyzes specifically the formation of C16:0 fatty alcohol (PubMed:24005667).</text>
</comment>
<comment type="catalytic activity">
    <reaction evidence="1 2">
        <text>a long-chain fatty acyl-CoA + 2 NADPH + 2 H(+) = a long-chain primary fatty alcohol + 2 NADP(+) + CoA</text>
        <dbReference type="Rhea" id="RHEA:52716"/>
        <dbReference type="ChEBI" id="CHEBI:15378"/>
        <dbReference type="ChEBI" id="CHEBI:57287"/>
        <dbReference type="ChEBI" id="CHEBI:57783"/>
        <dbReference type="ChEBI" id="CHEBI:58349"/>
        <dbReference type="ChEBI" id="CHEBI:77396"/>
        <dbReference type="ChEBI" id="CHEBI:83139"/>
        <dbReference type="EC" id="1.2.1.84"/>
    </reaction>
</comment>
<comment type="similarity">
    <text evidence="3">Belongs to the fatty acyl-CoA reductase family.</text>
</comment>
<comment type="sequence caution" evidence="3">
    <conflict type="erroneous termination">
        <sequence resource="EMBL-CDS" id="ABK28586"/>
    </conflict>
    <text>Extended C-terminus.</text>
</comment>
<comment type="sequence caution" evidence="3">
    <conflict type="erroneous gene model prediction">
        <sequence resource="EMBL-CDS" id="CAB88538"/>
    </conflict>
</comment>
<protein>
    <recommendedName>
        <fullName evidence="3">Fatty acyl-CoA reductase 8</fullName>
        <ecNumber evidence="1 2">1.2.1.84</ecNumber>
    </recommendedName>
</protein>
<feature type="chain" id="PRO_0000378348" description="Fatty acyl-CoA reductase 8">
    <location>
        <begin position="1"/>
        <end position="496"/>
    </location>
</feature>
<feature type="mutagenesis site" description="Increases protein stability and enzymatic activity. Catalyzes the formation of C18:0 fatty alcohol instead of C16:0; when associated with A-355 and V-377." evidence="2">
    <original>I</original>
    <variation>T</variation>
    <location>
        <position position="347"/>
    </location>
</feature>
<feature type="mutagenesis site" description="Catalyzes the formation of C18:0 fatty alcohol instead of C16:0; when associated with T-347 and V-377." evidence="2">
    <original>L</original>
    <variation>A</variation>
    <location>
        <position position="355"/>
    </location>
</feature>
<feature type="mutagenesis site" description="Increases protein stability and enzymatic activity." evidence="2">
    <original>S</original>
    <variation>P</variation>
    <location>
        <position position="363"/>
    </location>
</feature>
<feature type="mutagenesis site" description="Catalyzes the formation of C18:0 fatty alcohol instead of C16:0; when associated with T-347 and A-355." evidence="2">
    <original>M</original>
    <variation>V</variation>
    <location>
        <position position="377"/>
    </location>
</feature>
<sequence>MEFSCVHFLQNKTILVTGATGFLAKVFVEKILRVQPNVNKLYLVVRASDNEAATKRLRTEAFEKDLFKVLRDNLGDEKLNTLLSEKVVPVAGDIAMDHLGMKDSNLRERMQKEIDIVVNVAATTNFDERYDIGLGINTFGALNVLNFAKKCVKAQLLLHVSTAYVCGEKPGLLPEKPFVMEEICNENGLQLDINLERELMKQRLKELNEQGCSEEGTTFYMKELGMERAKLHGWPNTYVFTKSMGEMLLGNHKENLPLVIIRPTMITSTLFEPFPGWIEGLRTVDSVIIAYGKGVLKCFLVDVNSVCDMIPADMVANAMIAAAATHAGGSKVHMVYQVGSSHQNPIIYGEIREILFCYFTKNSLRSRNGSMITVSKMKLIPTLALFSLYMTIRYKLPVQLLKLVDIIYPSREGDEYKNKNRKIDMVMRLVKLYEPYVLFKGIFDDRNTKNLCAKQKEEDNRNSENFMFDFDPKIIKWKDYLINVHIPGLITHVLKK</sequence>
<proteinExistence type="evidence at protein level"/>
<evidence type="ECO:0000269" key="1">
    <source>
    </source>
</evidence>
<evidence type="ECO:0000269" key="2">
    <source>
    </source>
</evidence>
<evidence type="ECO:0000305" key="3"/>
<dbReference type="EC" id="1.2.1.84" evidence="1 2"/>
<dbReference type="EMBL" id="EU280153">
    <property type="protein sequence ID" value="ABZ10955.1"/>
    <property type="molecule type" value="mRNA"/>
</dbReference>
<dbReference type="EMBL" id="AL353818">
    <property type="protein sequence ID" value="CAB88538.1"/>
    <property type="status" value="ALT_SEQ"/>
    <property type="molecule type" value="Genomic_DNA"/>
</dbReference>
<dbReference type="EMBL" id="CP002686">
    <property type="protein sequence ID" value="AEE77915.1"/>
    <property type="molecule type" value="Genomic_DNA"/>
</dbReference>
<dbReference type="EMBL" id="DQ446732">
    <property type="protein sequence ID" value="ABE65991.1"/>
    <property type="molecule type" value="mRNA"/>
</dbReference>
<dbReference type="EMBL" id="DQ653127">
    <property type="protein sequence ID" value="ABK28586.1"/>
    <property type="status" value="ALT_SEQ"/>
    <property type="molecule type" value="mRNA"/>
</dbReference>
<dbReference type="PIR" id="T48936">
    <property type="entry name" value="T48936"/>
</dbReference>
<dbReference type="RefSeq" id="NP_190042.2">
    <property type="nucleotide sequence ID" value="NM_114324.3"/>
</dbReference>
<dbReference type="SMR" id="Q1PEI6"/>
<dbReference type="FunCoup" id="Q1PEI6">
    <property type="interactions" value="374"/>
</dbReference>
<dbReference type="STRING" id="3702.Q1PEI6"/>
<dbReference type="iPTMnet" id="Q1PEI6"/>
<dbReference type="PaxDb" id="3702-AT3G44560.1"/>
<dbReference type="EnsemblPlants" id="AT3G44560.1">
    <property type="protein sequence ID" value="AT3G44560.1"/>
    <property type="gene ID" value="AT3G44560"/>
</dbReference>
<dbReference type="GeneID" id="823581"/>
<dbReference type="Gramene" id="AT3G44560.1">
    <property type="protein sequence ID" value="AT3G44560.1"/>
    <property type="gene ID" value="AT3G44560"/>
</dbReference>
<dbReference type="KEGG" id="ath:AT3G44560"/>
<dbReference type="Araport" id="AT3G44560"/>
<dbReference type="TAIR" id="AT3G44560">
    <property type="gene designation" value="FAR8"/>
</dbReference>
<dbReference type="eggNOG" id="KOG1221">
    <property type="taxonomic scope" value="Eukaryota"/>
</dbReference>
<dbReference type="HOGENOM" id="CLU_024661_4_1_1"/>
<dbReference type="InParanoid" id="Q1PEI6"/>
<dbReference type="OMA" id="ALDWDSY"/>
<dbReference type="PhylomeDB" id="Q1PEI6"/>
<dbReference type="BioCyc" id="ARA:AT3G44560-MONOMER"/>
<dbReference type="BRENDA" id="1.2.1.50">
    <property type="organism ID" value="399"/>
</dbReference>
<dbReference type="PRO" id="PR:Q1PEI6"/>
<dbReference type="Proteomes" id="UP000006548">
    <property type="component" value="Chromosome 3"/>
</dbReference>
<dbReference type="ExpressionAtlas" id="Q1PEI6">
    <property type="expression patterns" value="baseline and differential"/>
</dbReference>
<dbReference type="GO" id="GO:0102965">
    <property type="term" value="F:alcohol-forming long-chain fatty acyl-CoA reductase activity"/>
    <property type="evidence" value="ECO:0007669"/>
    <property type="project" value="UniProtKB-EC"/>
</dbReference>
<dbReference type="GO" id="GO:0080019">
    <property type="term" value="F:alcohol-forming very long-chain fatty acyl-CoA reductase activity"/>
    <property type="evidence" value="ECO:0000314"/>
    <property type="project" value="TAIR"/>
</dbReference>
<dbReference type="GO" id="GO:0006629">
    <property type="term" value="P:lipid metabolic process"/>
    <property type="evidence" value="ECO:0007669"/>
    <property type="project" value="UniProtKB-KW"/>
</dbReference>
<dbReference type="CDD" id="cd05236">
    <property type="entry name" value="FAR-N_SDR_e"/>
    <property type="match status" value="1"/>
</dbReference>
<dbReference type="CDD" id="cd09071">
    <property type="entry name" value="FAR_C"/>
    <property type="match status" value="1"/>
</dbReference>
<dbReference type="Gene3D" id="3.40.50.720">
    <property type="entry name" value="NAD(P)-binding Rossmann-like Domain"/>
    <property type="match status" value="1"/>
</dbReference>
<dbReference type="InterPro" id="IPR026055">
    <property type="entry name" value="FAR"/>
</dbReference>
<dbReference type="InterPro" id="IPR033640">
    <property type="entry name" value="FAR_C"/>
</dbReference>
<dbReference type="InterPro" id="IPR013120">
    <property type="entry name" value="Far_NAD-bd"/>
</dbReference>
<dbReference type="InterPro" id="IPR036291">
    <property type="entry name" value="NAD(P)-bd_dom_sf"/>
</dbReference>
<dbReference type="PANTHER" id="PTHR11011:SF82">
    <property type="entry name" value="FATTY ACYL-COA REDUCTASE 8-RELATED"/>
    <property type="match status" value="1"/>
</dbReference>
<dbReference type="PANTHER" id="PTHR11011">
    <property type="entry name" value="MALE STERILITY PROTEIN 2-RELATED"/>
    <property type="match status" value="1"/>
</dbReference>
<dbReference type="Pfam" id="PF07993">
    <property type="entry name" value="NAD_binding_4"/>
    <property type="match status" value="1"/>
</dbReference>
<dbReference type="Pfam" id="PF03015">
    <property type="entry name" value="Sterile"/>
    <property type="match status" value="1"/>
</dbReference>
<dbReference type="SUPFAM" id="SSF51735">
    <property type="entry name" value="NAD(P)-binding Rossmann-fold domains"/>
    <property type="match status" value="1"/>
</dbReference>
<keyword id="KW-0444">Lipid biosynthesis</keyword>
<keyword id="KW-0443">Lipid metabolism</keyword>
<keyword id="KW-0521">NADP</keyword>
<keyword id="KW-0560">Oxidoreductase</keyword>
<keyword id="KW-1185">Reference proteome</keyword>
<organism>
    <name type="scientific">Arabidopsis thaliana</name>
    <name type="common">Mouse-ear cress</name>
    <dbReference type="NCBI Taxonomy" id="3702"/>
    <lineage>
        <taxon>Eukaryota</taxon>
        <taxon>Viridiplantae</taxon>
        <taxon>Streptophyta</taxon>
        <taxon>Embryophyta</taxon>
        <taxon>Tracheophyta</taxon>
        <taxon>Spermatophyta</taxon>
        <taxon>Magnoliopsida</taxon>
        <taxon>eudicotyledons</taxon>
        <taxon>Gunneridae</taxon>
        <taxon>Pentapetalae</taxon>
        <taxon>rosids</taxon>
        <taxon>malvids</taxon>
        <taxon>Brassicales</taxon>
        <taxon>Brassicaceae</taxon>
        <taxon>Camelineae</taxon>
        <taxon>Arabidopsis</taxon>
    </lineage>
</organism>
<gene>
    <name type="primary">FAR8</name>
    <name type="ordered locus">At3g44560</name>
    <name type="ORF">F14L2.110</name>
</gene>